<evidence type="ECO:0000250" key="1"/>
<evidence type="ECO:0000250" key="2">
    <source>
        <dbReference type="UniProtKB" id="E9PT87"/>
    </source>
</evidence>
<evidence type="ECO:0000250" key="3">
    <source>
        <dbReference type="UniProtKB" id="Q32MK0"/>
    </source>
</evidence>
<evidence type="ECO:0000255" key="4">
    <source>
        <dbReference type="PROSITE-ProRule" id="PRU00159"/>
    </source>
</evidence>
<evidence type="ECO:0000255" key="5">
    <source>
        <dbReference type="PROSITE-ProRule" id="PRU10027"/>
    </source>
</evidence>
<evidence type="ECO:0000256" key="6">
    <source>
        <dbReference type="SAM" id="MobiDB-lite"/>
    </source>
</evidence>
<evidence type="ECO:0000305" key="7"/>
<organism>
    <name type="scientific">Pongo abelii</name>
    <name type="common">Sumatran orangutan</name>
    <name type="synonym">Pongo pygmaeus abelii</name>
    <dbReference type="NCBI Taxonomy" id="9601"/>
    <lineage>
        <taxon>Eukaryota</taxon>
        <taxon>Metazoa</taxon>
        <taxon>Chordata</taxon>
        <taxon>Craniata</taxon>
        <taxon>Vertebrata</taxon>
        <taxon>Euteleostomi</taxon>
        <taxon>Mammalia</taxon>
        <taxon>Eutheria</taxon>
        <taxon>Euarchontoglires</taxon>
        <taxon>Primates</taxon>
        <taxon>Haplorrhini</taxon>
        <taxon>Catarrhini</taxon>
        <taxon>Hominidae</taxon>
        <taxon>Pongo</taxon>
    </lineage>
</organism>
<name>MYLK3_PONAB</name>
<proteinExistence type="evidence at transcript level"/>
<protein>
    <recommendedName>
        <fullName>Myosin light chain kinase 3</fullName>
        <ecNumber>2.7.11.18</ecNumber>
    </recommendedName>
    <alternativeName>
        <fullName>Cardiac-MyBP-C-associated Ca/CaM kinase</fullName>
        <shortName>Cardiac-MLCK</shortName>
    </alternativeName>
</protein>
<keyword id="KW-0067">ATP-binding</keyword>
<keyword id="KW-0963">Cytoplasm</keyword>
<keyword id="KW-0418">Kinase</keyword>
<keyword id="KW-0460">Magnesium</keyword>
<keyword id="KW-0547">Nucleotide-binding</keyword>
<keyword id="KW-0597">Phosphoprotein</keyword>
<keyword id="KW-1185">Reference proteome</keyword>
<keyword id="KW-0723">Serine/threonine-protein kinase</keyword>
<keyword id="KW-0808">Transferase</keyword>
<sequence length="819" mass="88376">MSGTSKESLGHGGLPGLGKACLTTMDKKLNMLNEKVDQLLHFQEDVTEKLQSMCRDMGHLERGLHRLEASRAPGPGGTDGVLRVDTQAGWPEVLELVRAMQQDAAQHGARLEALFRMVAAVDRAIALVGATFQKSKVADFLMQGRVPWRRGSPGDSPEENKERVEEEGAKPKHVLSASGVQSDAREPGEESQKADVLEGTVERLPPIRASGLGADPAQAVVSPGQGDGVPGPAQAFPGHLPLPTKGEAKAPETPSENLRTGLELAPAPGRVSVVSPSLEVAPGAGQGASSSRPDPEPLEEGTRLTPGPGPQCPGPPGLPAQARAAHSGGETPPRISIHIQEMGTPGEMLVTGRGSLGPTLTTDAPAAAQPGKQGPPGTGRCHQAPGTEPGEQTPEGARELSLLQESSSPGGVKAEEEQRAGAEPGTRPSLARSDDNDHKVGALGLQQGKSPGVGNPEPEQDCAARAPVRAEAVRRTPPGAEAGSMVLDDSPAPPAPFEHRLVSVKETSISAGYEVCQHEVLGGGRFGQVHRCTEKSTGLPLAAKIIKVKSAKDREDVKNEINIMNQLSHVNLIQLYDAFESKHSCTLVMEYVDGGELFDRITDEKYHLTELDVVLFTRQICEGVHYLHQHYILHLDLKPENILCVNQTGHQIKIIDFGLARRYKPREKLKVNFGTPEFLAPEVVNYEFVSFPTDMWSVGVITYMLLSGLSPFLGETDAETMNFIVNCSWDFDADTFEGLSEEAKDFVSRLLVKEESCRMSATQCLKHEWLNNLPAKALRSKTRLKSQLLLQKYIAQRKWKKHFYVVTAANRLRKFPTCP</sequence>
<dbReference type="EC" id="2.7.11.18"/>
<dbReference type="EMBL" id="CR857943">
    <property type="protein sequence ID" value="CAH90190.1"/>
    <property type="molecule type" value="mRNA"/>
</dbReference>
<dbReference type="RefSeq" id="NP_001125070.1">
    <property type="nucleotide sequence ID" value="NM_001131598.2"/>
</dbReference>
<dbReference type="SMR" id="Q5RDG7"/>
<dbReference type="FunCoup" id="Q5RDG7">
    <property type="interactions" value="1520"/>
</dbReference>
<dbReference type="STRING" id="9601.ENSPPYP00000008714"/>
<dbReference type="GeneID" id="100171951"/>
<dbReference type="KEGG" id="pon:100171951"/>
<dbReference type="CTD" id="91807"/>
<dbReference type="eggNOG" id="KOG0032">
    <property type="taxonomic scope" value="Eukaryota"/>
</dbReference>
<dbReference type="InParanoid" id="Q5RDG7"/>
<dbReference type="OrthoDB" id="10260894at2759"/>
<dbReference type="Proteomes" id="UP000001595">
    <property type="component" value="Unplaced"/>
</dbReference>
<dbReference type="GO" id="GO:0005737">
    <property type="term" value="C:cytoplasm"/>
    <property type="evidence" value="ECO:0007669"/>
    <property type="project" value="UniProtKB-SubCell"/>
</dbReference>
<dbReference type="GO" id="GO:0005634">
    <property type="term" value="C:nucleus"/>
    <property type="evidence" value="ECO:0007669"/>
    <property type="project" value="TreeGrafter"/>
</dbReference>
<dbReference type="GO" id="GO:0005524">
    <property type="term" value="F:ATP binding"/>
    <property type="evidence" value="ECO:0007669"/>
    <property type="project" value="UniProtKB-KW"/>
</dbReference>
<dbReference type="GO" id="GO:0004687">
    <property type="term" value="F:myosin light chain kinase activity"/>
    <property type="evidence" value="ECO:0007669"/>
    <property type="project" value="UniProtKB-EC"/>
</dbReference>
<dbReference type="GO" id="GO:0035556">
    <property type="term" value="P:intracellular signal transduction"/>
    <property type="evidence" value="ECO:0007669"/>
    <property type="project" value="TreeGrafter"/>
</dbReference>
<dbReference type="GO" id="GO:0043065">
    <property type="term" value="P:positive regulation of apoptotic process"/>
    <property type="evidence" value="ECO:0007669"/>
    <property type="project" value="TreeGrafter"/>
</dbReference>
<dbReference type="CDD" id="cd14192">
    <property type="entry name" value="STKc_MLCK3"/>
    <property type="match status" value="1"/>
</dbReference>
<dbReference type="FunFam" id="3.30.200.20:FF:000196">
    <property type="entry name" value="Myosin light chain kinase family, member 4"/>
    <property type="match status" value="1"/>
</dbReference>
<dbReference type="FunFam" id="1.10.510.10:FF:000135">
    <property type="entry name" value="Putative myosin light chain kinase 3"/>
    <property type="match status" value="1"/>
</dbReference>
<dbReference type="Gene3D" id="3.30.200.20">
    <property type="entry name" value="Phosphorylase Kinase, domain 1"/>
    <property type="match status" value="1"/>
</dbReference>
<dbReference type="Gene3D" id="1.10.510.10">
    <property type="entry name" value="Transferase(Phosphotransferase) domain 1"/>
    <property type="match status" value="1"/>
</dbReference>
<dbReference type="InterPro" id="IPR011009">
    <property type="entry name" value="Kinase-like_dom_sf"/>
</dbReference>
<dbReference type="InterPro" id="IPR000719">
    <property type="entry name" value="Prot_kinase_dom"/>
</dbReference>
<dbReference type="InterPro" id="IPR017441">
    <property type="entry name" value="Protein_kinase_ATP_BS"/>
</dbReference>
<dbReference type="InterPro" id="IPR008271">
    <property type="entry name" value="Ser/Thr_kinase_AS"/>
</dbReference>
<dbReference type="PANTHER" id="PTHR24342:SF20">
    <property type="entry name" value="MYOSIN LIGHT CHAIN KINASE, SMOOTH MUSCLE"/>
    <property type="match status" value="1"/>
</dbReference>
<dbReference type="PANTHER" id="PTHR24342">
    <property type="entry name" value="SERINE/THREONINE-PROTEIN KINASE 17"/>
    <property type="match status" value="1"/>
</dbReference>
<dbReference type="Pfam" id="PF00069">
    <property type="entry name" value="Pkinase"/>
    <property type="match status" value="1"/>
</dbReference>
<dbReference type="SMART" id="SM00220">
    <property type="entry name" value="S_TKc"/>
    <property type="match status" value="1"/>
</dbReference>
<dbReference type="SUPFAM" id="SSF56112">
    <property type="entry name" value="Protein kinase-like (PK-like)"/>
    <property type="match status" value="1"/>
</dbReference>
<dbReference type="PROSITE" id="PS00107">
    <property type="entry name" value="PROTEIN_KINASE_ATP"/>
    <property type="match status" value="1"/>
</dbReference>
<dbReference type="PROSITE" id="PS50011">
    <property type="entry name" value="PROTEIN_KINASE_DOM"/>
    <property type="match status" value="1"/>
</dbReference>
<dbReference type="PROSITE" id="PS00108">
    <property type="entry name" value="PROTEIN_KINASE_ST"/>
    <property type="match status" value="1"/>
</dbReference>
<comment type="function">
    <text evidence="1">Kinase that phosphorylates MYL2 in vitro. Promotes sarcomere formation in cardiomyocytes and increases cardiomyocyte contractility (By similarity).</text>
</comment>
<comment type="catalytic activity">
    <reaction>
        <text>L-seryl-[myosin light chain] + ATP = O-phospho-L-seryl-[myosin light chain] + ADP + H(+)</text>
        <dbReference type="Rhea" id="RHEA:22004"/>
        <dbReference type="Rhea" id="RHEA-COMP:13684"/>
        <dbReference type="Rhea" id="RHEA-COMP:13685"/>
        <dbReference type="ChEBI" id="CHEBI:15378"/>
        <dbReference type="ChEBI" id="CHEBI:29999"/>
        <dbReference type="ChEBI" id="CHEBI:30616"/>
        <dbReference type="ChEBI" id="CHEBI:83421"/>
        <dbReference type="ChEBI" id="CHEBI:456216"/>
        <dbReference type="EC" id="2.7.11.18"/>
    </reaction>
</comment>
<comment type="catalytic activity">
    <reaction>
        <text>L-threonyl-[myosin light chain] + ATP = O-phospho-L-threonyl-[myosin light chain] + ADP + H(+)</text>
        <dbReference type="Rhea" id="RHEA:53900"/>
        <dbReference type="Rhea" id="RHEA-COMP:13686"/>
        <dbReference type="Rhea" id="RHEA-COMP:13687"/>
        <dbReference type="ChEBI" id="CHEBI:15378"/>
        <dbReference type="ChEBI" id="CHEBI:30013"/>
        <dbReference type="ChEBI" id="CHEBI:30616"/>
        <dbReference type="ChEBI" id="CHEBI:61977"/>
        <dbReference type="ChEBI" id="CHEBI:456216"/>
        <dbReference type="EC" id="2.7.11.18"/>
    </reaction>
</comment>
<comment type="cofactor">
    <cofactor evidence="1">
        <name>Mg(2+)</name>
        <dbReference type="ChEBI" id="CHEBI:18420"/>
    </cofactor>
</comment>
<comment type="subcellular location">
    <subcellularLocation>
        <location evidence="1">Cytoplasm</location>
    </subcellularLocation>
</comment>
<comment type="PTM">
    <text evidence="1">Phosphorylated on serine residues.</text>
</comment>
<comment type="similarity">
    <text evidence="7">Belongs to the protein kinase superfamily. CAMK Ser/Thr protein kinase family.</text>
</comment>
<accession>Q5RDG7</accession>
<gene>
    <name type="primary">MYLK3</name>
</gene>
<reference key="1">
    <citation type="submission" date="2004-11" db="EMBL/GenBank/DDBJ databases">
        <authorList>
            <consortium name="The German cDNA consortium"/>
        </authorList>
    </citation>
    <scope>NUCLEOTIDE SEQUENCE [LARGE SCALE MRNA]</scope>
    <source>
        <tissue>Heart</tissue>
    </source>
</reference>
<feature type="chain" id="PRO_0000272202" description="Myosin light chain kinase 3">
    <location>
        <begin position="1"/>
        <end position="819"/>
    </location>
</feature>
<feature type="domain" description="Protein kinase" evidence="4">
    <location>
        <begin position="515"/>
        <end position="770"/>
    </location>
</feature>
<feature type="region of interest" description="Disordered" evidence="6">
    <location>
        <begin position="146"/>
        <end position="460"/>
    </location>
</feature>
<feature type="compositionally biased region" description="Basic and acidic residues" evidence="6">
    <location>
        <begin position="158"/>
        <end position="170"/>
    </location>
</feature>
<feature type="compositionally biased region" description="Basic and acidic residues" evidence="6">
    <location>
        <begin position="183"/>
        <end position="196"/>
    </location>
</feature>
<feature type="compositionally biased region" description="Pro residues" evidence="6">
    <location>
        <begin position="307"/>
        <end position="318"/>
    </location>
</feature>
<feature type="active site" description="Proton acceptor" evidence="4 5">
    <location>
        <position position="636"/>
    </location>
</feature>
<feature type="binding site" evidence="4">
    <location>
        <begin position="521"/>
        <end position="529"/>
    </location>
    <ligand>
        <name>ATP</name>
        <dbReference type="ChEBI" id="CHEBI:30616"/>
    </ligand>
</feature>
<feature type="binding site" evidence="4">
    <location>
        <position position="544"/>
    </location>
    <ligand>
        <name>ATP</name>
        <dbReference type="ChEBI" id="CHEBI:30616"/>
    </ligand>
</feature>
<feature type="modified residue" description="Phosphoserine" evidence="2">
    <location>
        <position position="152"/>
    </location>
</feature>
<feature type="modified residue" description="Phosphoserine" evidence="2">
    <location>
        <position position="355"/>
    </location>
</feature>
<feature type="modified residue" description="Phosphoserine" evidence="3">
    <location>
        <position position="401"/>
    </location>
</feature>
<feature type="modified residue" description="Phosphoserine" evidence="3">
    <location>
        <position position="408"/>
    </location>
</feature>